<gene>
    <name type="primary">N</name>
</gene>
<accession>P09614</accession>
<evidence type="ECO:0000250" key="1"/>
<evidence type="ECO:0000305" key="2"/>
<reference key="1">
    <citation type="journal article" date="1982" name="J. Virol.">
        <title>Nucleotide sequence analyses and predicted coding of bunyavirus genome RNA species.</title>
        <authorList>
            <person name="Clerx-Van Haaster C.M."/>
            <person name="Akashi H."/>
            <person name="Auperin D.D."/>
            <person name="Bishop D.H.L."/>
        </authorList>
    </citation>
    <scope>NUCLEOTIDE SEQUENCE [GENOMIC RNA]</scope>
</reference>
<name>NSS_BUNL7</name>
<sequence>MMSHQQVQINLILMQGIWTSVLKMQNHSTLLQLGSSSTMPQRPRLLS</sequence>
<comment type="function">
    <text evidence="1">Inhibits host transcriptional machinery, by producing modifications to the phosphorylation state of the C-terminal domain (CTD) of RNA polymerase II. Inhibits phosphorylation at serine 2 in the heptapeptide repeat (YSPTSPS) of the CTD of RNA polymerase II, suggesting that the elongation step of transcription and/or 3'-end processing is prevented. Inhibition of host transcription machinery leads to shut off of host cell protein synthesis and inhibition of the host innate immune response. NSs also seems to be involved in the nuclear relocalization of host PABP1 (By similarity).</text>
</comment>
<comment type="alternative products">
    <event type="alternative initiation"/>
    <isoform>
        <id>P09614-1</id>
        <name>NSS</name>
        <sequence type="displayed"/>
    </isoform>
    <isoform>
        <id>P09614-2</id>
        <name>N</name>
        <sequence type="not described"/>
    </isoform>
</comment>
<comment type="miscellaneous">
    <molecule>Isoform NSS</molecule>
    <text>Produced by alternative initiation in the N gene, but encoded on another frame.</text>
</comment>
<comment type="similarity">
    <text evidence="2">Belongs to the orthobunyavirus NS-S protein family.</text>
</comment>
<organismHost>
    <name type="scientific">Cervidae</name>
    <name type="common">Deer</name>
    <dbReference type="NCBI Taxonomy" id="9850"/>
</organismHost>
<organismHost>
    <name type="scientific">Homo sapiens</name>
    <name type="common">Human</name>
    <dbReference type="NCBI Taxonomy" id="9606"/>
</organismHost>
<organismHost>
    <name type="scientific">Ochlerotatus triseriatus</name>
    <name type="common">Eastern treehole mosquito</name>
    <name type="synonym">Aedes triseriatus</name>
    <dbReference type="NCBI Taxonomy" id="7162"/>
</organismHost>
<organismHost>
    <name type="scientific">Tamias</name>
    <dbReference type="NCBI Taxonomy" id="13712"/>
</organismHost>
<proteinExistence type="inferred from homology"/>
<dbReference type="EMBL" id="J02232">
    <property type="status" value="NOT_ANNOTATED_CDS"/>
    <property type="molecule type" value="Genomic_RNA"/>
</dbReference>
<dbReference type="GO" id="GO:0039657">
    <property type="term" value="P:symbiont-mediated suppression of host gene expression"/>
    <property type="evidence" value="ECO:0007669"/>
    <property type="project" value="UniProtKB-KW"/>
</dbReference>
<dbReference type="GO" id="GO:0016032">
    <property type="term" value="P:viral process"/>
    <property type="evidence" value="ECO:0007669"/>
    <property type="project" value="InterPro"/>
</dbReference>
<dbReference type="InterPro" id="IPR000797">
    <property type="entry name" value="Bunya_NSs"/>
</dbReference>
<dbReference type="Pfam" id="PF01104">
    <property type="entry name" value="Bunya_NS-S"/>
    <property type="match status" value="1"/>
</dbReference>
<dbReference type="PIRSF" id="PIRSF003954">
    <property type="entry name" value="NS-S_OrthobunV"/>
    <property type="match status" value="1"/>
</dbReference>
<organism>
    <name type="scientific">Bunyavirus La Crosse (isolate Aedes triseriatus/United States/L74/1974)</name>
    <dbReference type="NCBI Taxonomy" id="11578"/>
    <lineage>
        <taxon>Viruses</taxon>
        <taxon>Riboviria</taxon>
        <taxon>Orthornavirae</taxon>
        <taxon>Negarnaviricota</taxon>
        <taxon>Polyploviricotina</taxon>
        <taxon>Ellioviricetes</taxon>
        <taxon>Bunyavirales</taxon>
        <taxon>Peribunyaviridae</taxon>
        <taxon>Orthobunyavirus</taxon>
        <taxon>Orthobunyavirus lacrosseense</taxon>
    </lineage>
</organism>
<feature type="chain" id="PRO_0000221974" description="Non-structural protein NS-S">
    <location>
        <begin position="1"/>
        <end position="47" status="greater than"/>
    </location>
</feature>
<feature type="non-terminal residue">
    <location>
        <position position="47"/>
    </location>
</feature>
<keyword id="KW-0024">Alternative initiation</keyword>
<keyword id="KW-1262">Eukaryotic host gene expression shutoff by virus</keyword>
<keyword id="KW-1191">Eukaryotic host transcription shutoff by virus</keyword>
<keyword id="KW-1190">Host gene expression shutoff by virus</keyword>
<keyword id="KW-0945">Host-virus interaction</keyword>
<keyword id="KW-1111">Inhibition of eukaryotic host transcription initiation by virus</keyword>
<protein>
    <recommendedName>
        <fullName>Non-structural protein NS-S</fullName>
    </recommendedName>
</protein>